<keyword id="KW-0963">Cytoplasm</keyword>
<keyword id="KW-0456">Lyase</keyword>
<keyword id="KW-0585">Phenylalanine catabolism</keyword>
<keyword id="KW-0587">Phenylpropanoid metabolism</keyword>
<gene>
    <name evidence="5" type="primary">PAL2</name>
</gene>
<feature type="chain" id="PRO_0000454792" description="Phenylalanine ammonia-lyase 2">
    <location>
        <begin position="1"/>
        <end position="747"/>
    </location>
</feature>
<feature type="region of interest" description="Disordered" evidence="3">
    <location>
        <begin position="1"/>
        <end position="47"/>
    </location>
</feature>
<feature type="compositionally biased region" description="Polar residues" evidence="3">
    <location>
        <begin position="1"/>
        <end position="20"/>
    </location>
</feature>
<feature type="active site" description="Proton donor/acceptor" evidence="2">
    <location>
        <position position="124"/>
    </location>
</feature>
<feature type="binding site" evidence="2">
    <location>
        <position position="290"/>
    </location>
    <ligand>
        <name>(E)-cinnamate</name>
        <dbReference type="ChEBI" id="CHEBI:15669"/>
    </ligand>
</feature>
<feature type="binding site" evidence="2">
    <location>
        <position position="380"/>
    </location>
    <ligand>
        <name>(E)-cinnamate</name>
        <dbReference type="ChEBI" id="CHEBI:15669"/>
    </ligand>
</feature>
<feature type="binding site" evidence="2">
    <location>
        <position position="386"/>
    </location>
    <ligand>
        <name>(E)-cinnamate</name>
        <dbReference type="ChEBI" id="CHEBI:15669"/>
    </ligand>
</feature>
<feature type="binding site" evidence="2">
    <location>
        <position position="416"/>
    </location>
    <ligand>
        <name>(E)-cinnamate</name>
        <dbReference type="ChEBI" id="CHEBI:15669"/>
    </ligand>
</feature>
<feature type="binding site" evidence="1">
    <location>
        <position position="487"/>
    </location>
    <ligand>
        <name>(E)-cinnamate</name>
        <dbReference type="ChEBI" id="CHEBI:15669"/>
    </ligand>
</feature>
<feature type="binding site" evidence="1">
    <location>
        <position position="515"/>
    </location>
    <ligand>
        <name>(E)-cinnamate</name>
        <dbReference type="ChEBI" id="CHEBI:15669"/>
    </ligand>
</feature>
<feature type="binding site" evidence="2">
    <location>
        <position position="518"/>
    </location>
    <ligand>
        <name>(E)-cinnamate</name>
        <dbReference type="ChEBI" id="CHEBI:15669"/>
    </ligand>
</feature>
<feature type="modified residue" description="2,3-didehydroalanine (Ser)" evidence="2">
    <location>
        <position position="230"/>
    </location>
</feature>
<feature type="cross-link" description="5-imidazolinone (Ala-Gly)" evidence="2">
    <location>
        <begin position="229"/>
        <end position="231"/>
    </location>
</feature>
<dbReference type="EC" id="4.3.1.24" evidence="4"/>
<dbReference type="EMBL" id="MK207024">
    <property type="protein sequence ID" value="QDF60495.1"/>
    <property type="molecule type" value="mRNA"/>
</dbReference>
<dbReference type="SMR" id="A0A4Y6HUD7"/>
<dbReference type="VEuPathDB" id="FungiDB:PC9H_007828"/>
<dbReference type="VEuPathDB" id="FungiDB:PLEOSDRAFT_173727"/>
<dbReference type="UniPathway" id="UPA00713">
    <property type="reaction ID" value="UER00725"/>
</dbReference>
<dbReference type="GO" id="GO:0005737">
    <property type="term" value="C:cytoplasm"/>
    <property type="evidence" value="ECO:0007669"/>
    <property type="project" value="UniProtKB-SubCell"/>
</dbReference>
<dbReference type="GO" id="GO:0045548">
    <property type="term" value="F:phenylalanine ammonia-lyase activity"/>
    <property type="evidence" value="ECO:0000314"/>
    <property type="project" value="UniProtKB"/>
</dbReference>
<dbReference type="GO" id="GO:0009800">
    <property type="term" value="P:cinnamic acid biosynthetic process"/>
    <property type="evidence" value="ECO:0000305"/>
    <property type="project" value="UniProtKB"/>
</dbReference>
<dbReference type="GO" id="GO:0006559">
    <property type="term" value="P:L-phenylalanine catabolic process"/>
    <property type="evidence" value="ECO:0007669"/>
    <property type="project" value="UniProtKB-KW"/>
</dbReference>
<dbReference type="CDD" id="cd00332">
    <property type="entry name" value="PAL-HAL"/>
    <property type="match status" value="1"/>
</dbReference>
<dbReference type="Gene3D" id="1.20.200.10">
    <property type="entry name" value="Fumarase/aspartase (Central domain)"/>
    <property type="match status" value="1"/>
</dbReference>
<dbReference type="Gene3D" id="1.10.275.10">
    <property type="entry name" value="Fumarase/aspartase (N-terminal domain)"/>
    <property type="match status" value="1"/>
</dbReference>
<dbReference type="Gene3D" id="1.10.274.20">
    <property type="entry name" value="Phenylalanine ammonia-lyase 1, domain 3"/>
    <property type="match status" value="1"/>
</dbReference>
<dbReference type="InterPro" id="IPR001106">
    <property type="entry name" value="Aromatic_Lyase"/>
</dbReference>
<dbReference type="InterPro" id="IPR024083">
    <property type="entry name" value="Fumarase/histidase_N"/>
</dbReference>
<dbReference type="InterPro" id="IPR008948">
    <property type="entry name" value="L-Aspartase-like"/>
</dbReference>
<dbReference type="InterPro" id="IPR022313">
    <property type="entry name" value="Phe/His_NH3-lyase_AS"/>
</dbReference>
<dbReference type="InterPro" id="IPR005922">
    <property type="entry name" value="Phe_NH3-lyase"/>
</dbReference>
<dbReference type="InterPro" id="IPR023144">
    <property type="entry name" value="Phe_NH3-lyase_shielding_dom_sf"/>
</dbReference>
<dbReference type="NCBIfam" id="TIGR01226">
    <property type="entry name" value="phe_am_lyase"/>
    <property type="match status" value="1"/>
</dbReference>
<dbReference type="PANTHER" id="PTHR10362">
    <property type="entry name" value="HISTIDINE AMMONIA-LYASE"/>
    <property type="match status" value="1"/>
</dbReference>
<dbReference type="Pfam" id="PF00221">
    <property type="entry name" value="Lyase_aromatic"/>
    <property type="match status" value="1"/>
</dbReference>
<dbReference type="SUPFAM" id="SSF48557">
    <property type="entry name" value="L-aspartase-like"/>
    <property type="match status" value="1"/>
</dbReference>
<dbReference type="PROSITE" id="PS00488">
    <property type="entry name" value="PAL_HISTIDASE"/>
    <property type="match status" value="1"/>
</dbReference>
<evidence type="ECO:0000250" key="1">
    <source>
        <dbReference type="UniProtKB" id="P11544"/>
    </source>
</evidence>
<evidence type="ECO:0000250" key="2">
    <source>
        <dbReference type="UniProtKB" id="Q68G84"/>
    </source>
</evidence>
<evidence type="ECO:0000256" key="3">
    <source>
        <dbReference type="SAM" id="MobiDB-lite"/>
    </source>
</evidence>
<evidence type="ECO:0000269" key="4">
    <source>
    </source>
</evidence>
<evidence type="ECO:0000303" key="5">
    <source>
    </source>
</evidence>
<evidence type="ECO:0000305" key="6"/>
<evidence type="ECO:0000312" key="7">
    <source>
        <dbReference type="EMBL" id="QDF60495.1"/>
    </source>
</evidence>
<accession>A0A4Y6HUD7</accession>
<protein>
    <recommendedName>
        <fullName evidence="5">Phenylalanine ammonia-lyase 2</fullName>
        <ecNumber evidence="4">4.3.1.24</ecNumber>
    </recommendedName>
    <alternativeName>
        <fullName evidence="5">PoPAL2</fullName>
    </alternativeName>
</protein>
<reference evidence="6" key="1">
    <citation type="journal article" date="2019" name="BMC Microbiol.">
        <title>Expression patterns of two pal genes of Pleurotus ostreatus across developmental stages and under heat stress.</title>
        <authorList>
            <person name="Hou L."/>
            <person name="Wang L."/>
            <person name="Wu X."/>
            <person name="Gao W."/>
            <person name="Zhang J."/>
            <person name="Huang C."/>
        </authorList>
    </citation>
    <scope>NUCLEOTIDE SEQUENCE [MRNA]</scope>
    <scope>FUNCTION</scope>
    <scope>CATALYTIC ACTIVITY</scope>
    <scope>DEVELOPMENTAL STAGE</scope>
    <scope>INDUCTION</scope>
    <scope>DISRUPTION PHENOTYPE</scope>
    <source>
        <strain evidence="5">CCMSSC00389</strain>
    </source>
</reference>
<proteinExistence type="evidence at protein level"/>
<sequence length="747" mass="79946">MTILSGTTAAPRVNGTTMNGHSKPHTNGVHLNGHAPKATTESPWPQSEEKTLLDKFVEAYYEFESYKSGQTVKVDGKTLSLAGVVAAARHHAKISLDDSASIKDKVVKSRKVIADKVASGASVYGLSTGFGGSADTRTDQPLSLGHALLQHQHVGVLPSSSQPLDVLPLSDPMSATSMPEAWVRAAMLIRMNSLIRGHSGVRWELIEKIAEIFDANITPVVPLRSSISASGDLSPLSYIAGTVVGNPSIRVFDGPAAFGAREMVPSAKALASHGIDPLPLASKEPLGILNGTAFSAAVGALALNEAVHFAMLAQVCTAMGTEALVGTRLSFEPFIHATCRPHPGQIEAARNIYNLLEGTTFASVHHEEVHIAEDQGTLRQDRYPLRTSPQFLGPQLEDILHAYVSVTQECNSTTDNPLIDGETGEIHHGGNFQAMAVTNAMEKTRLALHHIGKLLFAQCTELVNPAMNNGLPPSLAATDPSLNYHTKGIDIATAAYVSELGYLANPVSTHIQSAEMHNQAVNSLALISARATVNSLDVLSLLISSYLYILCQALDLRALQMEFVKGVEEIIREELSLLFASVVSPAELEALTSKVLSAAQTSLDTSGSMDAPARMKKMASTTTIPLFDFLTELTLPDAISSGIAMVSIPSFRSHLASRATALLDQLRRDYLSGQRGAAPASPYLNKTRMVYEFVRLTLGVKMHGSENYARFAKGLGVEDETIGQNISRIHEAIRDGKMQAITVAMFA</sequence>
<comment type="function">
    <text evidence="1 4">Catalyzes the non-oxidative deamination of L-phenylalanine to form trans-cinnamic acid and a free ammonium ion (PubMed:31655558). Facilitates the commitment step in phenylpropanoid pathways that produce secondary metabolites such as lignins, coumarins and flavonoids (By similarity).</text>
</comment>
<comment type="catalytic activity">
    <reaction evidence="4">
        <text>L-phenylalanine = (E)-cinnamate + NH4(+)</text>
        <dbReference type="Rhea" id="RHEA:21384"/>
        <dbReference type="ChEBI" id="CHEBI:15669"/>
        <dbReference type="ChEBI" id="CHEBI:28938"/>
        <dbReference type="ChEBI" id="CHEBI:58095"/>
        <dbReference type="EC" id="4.3.1.24"/>
    </reaction>
</comment>
<comment type="pathway">
    <text evidence="6">Phenylpropanoid metabolism; trans-cinnamate biosynthesis; trans-cinnamate from L-phenylalanine: step 1/1.</text>
</comment>
<comment type="subunit">
    <text evidence="1">Homotetramer.</text>
</comment>
<comment type="subcellular location">
    <subcellularLocation>
        <location evidence="6">Cytoplasm</location>
    </subcellularLocation>
</comment>
<comment type="developmental stage">
    <text evidence="4">Very highly expressed in spores (PubMed:31655558). Expression is higher in fruiting bodies than in primordia, and low in mycelia (PubMed:31655558). In the fruiting body, present in the stipe, cap, gill and pileipellis (PubMed:31655558).</text>
</comment>
<comment type="induction">
    <text evidence="4">Induced by thermal stress.</text>
</comment>
<comment type="PTM">
    <text evidence="2">Contains an active site 4-methylidene-imidazol-5-one (MIO), which is formed autocatalytically by cyclization and dehydration of residues Ala-Ser-Gly.</text>
</comment>
<comment type="disruption phenotype">
    <text evidence="4">RNAi-mediated knockdown results in delayed primordium formation (PubMed:31655558). RNAi-mediated knockdown in mycelia results in resistance to H2O2 (PubMed:31655558).</text>
</comment>
<comment type="similarity">
    <text evidence="6">Belongs to the PAL/histidase family.</text>
</comment>
<name>PALY2_PLEOS</name>
<organism evidence="7">
    <name type="scientific">Pleurotus ostreatus</name>
    <name type="common">Oyster mushroom</name>
    <name type="synonym">White-rot fungus</name>
    <dbReference type="NCBI Taxonomy" id="5322"/>
    <lineage>
        <taxon>Eukaryota</taxon>
        <taxon>Fungi</taxon>
        <taxon>Dikarya</taxon>
        <taxon>Basidiomycota</taxon>
        <taxon>Agaricomycotina</taxon>
        <taxon>Agaricomycetes</taxon>
        <taxon>Agaricomycetidae</taxon>
        <taxon>Agaricales</taxon>
        <taxon>Pleurotineae</taxon>
        <taxon>Pleurotaceae</taxon>
        <taxon>Pleurotus</taxon>
    </lineage>
</organism>